<accession>Q4UT63</accession>
<comment type="function">
    <text evidence="1">Part of the ABC transporter complex PstSACB involved in phosphate import. Responsible for energy coupling to the transport system.</text>
</comment>
<comment type="catalytic activity">
    <reaction evidence="1">
        <text>phosphate(out) + ATP + H2O = ADP + 2 phosphate(in) + H(+)</text>
        <dbReference type="Rhea" id="RHEA:24440"/>
        <dbReference type="ChEBI" id="CHEBI:15377"/>
        <dbReference type="ChEBI" id="CHEBI:15378"/>
        <dbReference type="ChEBI" id="CHEBI:30616"/>
        <dbReference type="ChEBI" id="CHEBI:43474"/>
        <dbReference type="ChEBI" id="CHEBI:456216"/>
        <dbReference type="EC" id="7.3.2.1"/>
    </reaction>
</comment>
<comment type="subunit">
    <text evidence="1">The complex is composed of two ATP-binding proteins (PstB), two transmembrane proteins (PstC and PstA) and a solute-binding protein (PstS).</text>
</comment>
<comment type="subcellular location">
    <subcellularLocation>
        <location evidence="1">Cell inner membrane</location>
        <topology evidence="1">Peripheral membrane protein</topology>
    </subcellularLocation>
</comment>
<comment type="similarity">
    <text evidence="1">Belongs to the ABC transporter superfamily. Phosphate importer (TC 3.A.1.7) family.</text>
</comment>
<organism>
    <name type="scientific">Xanthomonas campestris pv. campestris (strain 8004)</name>
    <dbReference type="NCBI Taxonomy" id="314565"/>
    <lineage>
        <taxon>Bacteria</taxon>
        <taxon>Pseudomonadati</taxon>
        <taxon>Pseudomonadota</taxon>
        <taxon>Gammaproteobacteria</taxon>
        <taxon>Lysobacterales</taxon>
        <taxon>Lysobacteraceae</taxon>
        <taxon>Xanthomonas</taxon>
    </lineage>
</organism>
<feature type="chain" id="PRO_0000272574" description="Phosphate import ATP-binding protein PstB">
    <location>
        <begin position="1"/>
        <end position="267"/>
    </location>
</feature>
<feature type="domain" description="ABC transporter" evidence="1">
    <location>
        <begin position="21"/>
        <end position="262"/>
    </location>
</feature>
<feature type="binding site" evidence="1">
    <location>
        <begin position="53"/>
        <end position="60"/>
    </location>
    <ligand>
        <name>ATP</name>
        <dbReference type="ChEBI" id="CHEBI:30616"/>
    </ligand>
</feature>
<gene>
    <name evidence="1" type="primary">pstB</name>
    <name type="ordered locus">XC_2711</name>
</gene>
<protein>
    <recommendedName>
        <fullName evidence="1">Phosphate import ATP-binding protein PstB</fullName>
        <ecNumber evidence="1">7.3.2.1</ecNumber>
    </recommendedName>
    <alternativeName>
        <fullName evidence="1">ABC phosphate transporter</fullName>
    </alternativeName>
    <alternativeName>
        <fullName evidence="1">Phosphate-transporting ATPase</fullName>
    </alternativeName>
</protein>
<sequence length="267" mass="30020">MHRIAVPAAKGAPTAQAPVKVAARNLDFYYDKYHALKGINIEIPEKRVTALIGPSGCGKSTLLRIFNRIYALYPKLEARGEVLLDGENILSPKYPMNRLRSKVGMVFQKPVPFPMTIFENVAYGIRHHEKLSKADMQNRVEHALRQGALWDEVKDKLGQSALGLSGGQQQRLCIARAVALRPDVLLLDEPTSALDPISTSRIEQLVEELKRDYTIVIVTHNMQQAARVSDYTAFMYLGDLIEHDRTETIFSQPSKQQTEDYITGRFG</sequence>
<reference key="1">
    <citation type="journal article" date="2005" name="Genome Res.">
        <title>Comparative and functional genomic analyses of the pathogenicity of phytopathogen Xanthomonas campestris pv. campestris.</title>
        <authorList>
            <person name="Qian W."/>
            <person name="Jia Y."/>
            <person name="Ren S.-X."/>
            <person name="He Y.-Q."/>
            <person name="Feng J.-X."/>
            <person name="Lu L.-F."/>
            <person name="Sun Q."/>
            <person name="Ying G."/>
            <person name="Tang D.-J."/>
            <person name="Tang H."/>
            <person name="Wu W."/>
            <person name="Hao P."/>
            <person name="Wang L."/>
            <person name="Jiang B.-L."/>
            <person name="Zeng S."/>
            <person name="Gu W.-Y."/>
            <person name="Lu G."/>
            <person name="Rong L."/>
            <person name="Tian Y."/>
            <person name="Yao Z."/>
            <person name="Fu G."/>
            <person name="Chen B."/>
            <person name="Fang R."/>
            <person name="Qiang B."/>
            <person name="Chen Z."/>
            <person name="Zhao G.-P."/>
            <person name="Tang J.-L."/>
            <person name="He C."/>
        </authorList>
    </citation>
    <scope>NUCLEOTIDE SEQUENCE [LARGE SCALE GENOMIC DNA]</scope>
    <source>
        <strain>8004</strain>
    </source>
</reference>
<evidence type="ECO:0000255" key="1">
    <source>
        <dbReference type="HAMAP-Rule" id="MF_01702"/>
    </source>
</evidence>
<dbReference type="EC" id="7.3.2.1" evidence="1"/>
<dbReference type="EMBL" id="CP000050">
    <property type="protein sequence ID" value="AAY49760.1"/>
    <property type="molecule type" value="Genomic_DNA"/>
</dbReference>
<dbReference type="SMR" id="Q4UT63"/>
<dbReference type="KEGG" id="xcb:XC_2711"/>
<dbReference type="HOGENOM" id="CLU_000604_1_22_6"/>
<dbReference type="Proteomes" id="UP000000420">
    <property type="component" value="Chromosome"/>
</dbReference>
<dbReference type="GO" id="GO:0005886">
    <property type="term" value="C:plasma membrane"/>
    <property type="evidence" value="ECO:0007669"/>
    <property type="project" value="UniProtKB-SubCell"/>
</dbReference>
<dbReference type="GO" id="GO:0005524">
    <property type="term" value="F:ATP binding"/>
    <property type="evidence" value="ECO:0007669"/>
    <property type="project" value="UniProtKB-KW"/>
</dbReference>
<dbReference type="GO" id="GO:0016887">
    <property type="term" value="F:ATP hydrolysis activity"/>
    <property type="evidence" value="ECO:0007669"/>
    <property type="project" value="InterPro"/>
</dbReference>
<dbReference type="GO" id="GO:0015415">
    <property type="term" value="F:ATPase-coupled phosphate ion transmembrane transporter activity"/>
    <property type="evidence" value="ECO:0007669"/>
    <property type="project" value="UniProtKB-EC"/>
</dbReference>
<dbReference type="GO" id="GO:0035435">
    <property type="term" value="P:phosphate ion transmembrane transport"/>
    <property type="evidence" value="ECO:0007669"/>
    <property type="project" value="InterPro"/>
</dbReference>
<dbReference type="CDD" id="cd03260">
    <property type="entry name" value="ABC_PstB_phosphate_transporter"/>
    <property type="match status" value="1"/>
</dbReference>
<dbReference type="FunFam" id="3.40.50.300:FF:000132">
    <property type="entry name" value="Phosphate import ATP-binding protein PstB"/>
    <property type="match status" value="1"/>
</dbReference>
<dbReference type="Gene3D" id="3.40.50.300">
    <property type="entry name" value="P-loop containing nucleotide triphosphate hydrolases"/>
    <property type="match status" value="1"/>
</dbReference>
<dbReference type="InterPro" id="IPR003593">
    <property type="entry name" value="AAA+_ATPase"/>
</dbReference>
<dbReference type="InterPro" id="IPR003439">
    <property type="entry name" value="ABC_transporter-like_ATP-bd"/>
</dbReference>
<dbReference type="InterPro" id="IPR017871">
    <property type="entry name" value="ABC_transporter-like_CS"/>
</dbReference>
<dbReference type="InterPro" id="IPR027417">
    <property type="entry name" value="P-loop_NTPase"/>
</dbReference>
<dbReference type="InterPro" id="IPR005670">
    <property type="entry name" value="PstB-like"/>
</dbReference>
<dbReference type="NCBIfam" id="TIGR00972">
    <property type="entry name" value="3a0107s01c2"/>
    <property type="match status" value="1"/>
</dbReference>
<dbReference type="PANTHER" id="PTHR43423">
    <property type="entry name" value="ABC TRANSPORTER I FAMILY MEMBER 17"/>
    <property type="match status" value="1"/>
</dbReference>
<dbReference type="PANTHER" id="PTHR43423:SF3">
    <property type="entry name" value="PHOSPHATE IMPORT ATP-BINDING PROTEIN PSTB"/>
    <property type="match status" value="1"/>
</dbReference>
<dbReference type="Pfam" id="PF00005">
    <property type="entry name" value="ABC_tran"/>
    <property type="match status" value="1"/>
</dbReference>
<dbReference type="SMART" id="SM00382">
    <property type="entry name" value="AAA"/>
    <property type="match status" value="1"/>
</dbReference>
<dbReference type="SUPFAM" id="SSF52540">
    <property type="entry name" value="P-loop containing nucleoside triphosphate hydrolases"/>
    <property type="match status" value="1"/>
</dbReference>
<dbReference type="PROSITE" id="PS00211">
    <property type="entry name" value="ABC_TRANSPORTER_1"/>
    <property type="match status" value="1"/>
</dbReference>
<dbReference type="PROSITE" id="PS50893">
    <property type="entry name" value="ABC_TRANSPORTER_2"/>
    <property type="match status" value="1"/>
</dbReference>
<dbReference type="PROSITE" id="PS51238">
    <property type="entry name" value="PSTB"/>
    <property type="match status" value="1"/>
</dbReference>
<proteinExistence type="inferred from homology"/>
<name>PSTB_XANC8</name>
<keyword id="KW-0067">ATP-binding</keyword>
<keyword id="KW-0997">Cell inner membrane</keyword>
<keyword id="KW-1003">Cell membrane</keyword>
<keyword id="KW-0472">Membrane</keyword>
<keyword id="KW-0547">Nucleotide-binding</keyword>
<keyword id="KW-0592">Phosphate transport</keyword>
<keyword id="KW-1278">Translocase</keyword>
<keyword id="KW-0813">Transport</keyword>